<comment type="function">
    <text evidence="1">Catalyzes the reduction of the glycolytic intermediate dihydroxyacetone phosphate (DHAP) to sn-glycerol 3-phosphate (G3P), the key precursor for phospholipid synthesis.</text>
</comment>
<comment type="catalytic activity">
    <reaction evidence="1">
        <text>sn-glycerol 3-phosphate + NAD(+) = dihydroxyacetone phosphate + NADH + H(+)</text>
        <dbReference type="Rhea" id="RHEA:11092"/>
        <dbReference type="ChEBI" id="CHEBI:15378"/>
        <dbReference type="ChEBI" id="CHEBI:57540"/>
        <dbReference type="ChEBI" id="CHEBI:57597"/>
        <dbReference type="ChEBI" id="CHEBI:57642"/>
        <dbReference type="ChEBI" id="CHEBI:57945"/>
        <dbReference type="EC" id="1.1.1.94"/>
    </reaction>
    <physiologicalReaction direction="right-to-left" evidence="1">
        <dbReference type="Rhea" id="RHEA:11094"/>
    </physiologicalReaction>
</comment>
<comment type="catalytic activity">
    <reaction evidence="1">
        <text>sn-glycerol 3-phosphate + NADP(+) = dihydroxyacetone phosphate + NADPH + H(+)</text>
        <dbReference type="Rhea" id="RHEA:11096"/>
        <dbReference type="ChEBI" id="CHEBI:15378"/>
        <dbReference type="ChEBI" id="CHEBI:57597"/>
        <dbReference type="ChEBI" id="CHEBI:57642"/>
        <dbReference type="ChEBI" id="CHEBI:57783"/>
        <dbReference type="ChEBI" id="CHEBI:58349"/>
        <dbReference type="EC" id="1.1.1.94"/>
    </reaction>
    <physiologicalReaction direction="right-to-left" evidence="1">
        <dbReference type="Rhea" id="RHEA:11098"/>
    </physiologicalReaction>
</comment>
<comment type="pathway">
    <text evidence="1">Membrane lipid metabolism; glycerophospholipid metabolism.</text>
</comment>
<comment type="subcellular location">
    <subcellularLocation>
        <location evidence="1">Cytoplasm</location>
    </subcellularLocation>
</comment>
<comment type="similarity">
    <text evidence="1">Belongs to the NAD-dependent glycerol-3-phosphate dehydrogenase family.</text>
</comment>
<sequence>MTKITVFGMGSFGTALANVLAENGHDVLMWGKNQDAVDELNTCHTNKKYLKYAKLDVNIIATSDMTKAIQFADIYLMALPTKAMREVASQINDKLTSKKTFIHVAKGIENGTFKRVSEMIEDSISPEYNAGIGVLSGPSHAEEVVVKQPTTVAASSKDKSVSKLTQDLFMNDYLRVYTNDDLIGVELGGALKNIIAVASGIVAGIGYGDNAKAALMTRGLAEISRLGEKLGADPMTFLGLGGIGDLIVTCTSTHSRNFTLGYKLGQGESMDQALSEMNMVVEGIYTTKSVYHLAKEKNVDMPITNALYRVLFENISVKECVKDLMERDKKSE</sequence>
<reference key="1">
    <citation type="journal article" date="2007" name="BMC Microbiol.">
        <title>Subtle genetic changes enhance virulence of methicillin resistant and sensitive Staphylococcus aureus.</title>
        <authorList>
            <person name="Highlander S.K."/>
            <person name="Hulten K.G."/>
            <person name="Qin X."/>
            <person name="Jiang H."/>
            <person name="Yerrapragada S."/>
            <person name="Mason E.O. Jr."/>
            <person name="Shang Y."/>
            <person name="Williams T.M."/>
            <person name="Fortunov R.M."/>
            <person name="Liu Y."/>
            <person name="Igboeli O."/>
            <person name="Petrosino J."/>
            <person name="Tirumalai M."/>
            <person name="Uzman A."/>
            <person name="Fox G.E."/>
            <person name="Cardenas A.M."/>
            <person name="Muzny D.M."/>
            <person name="Hemphill L."/>
            <person name="Ding Y."/>
            <person name="Dugan S."/>
            <person name="Blyth P.R."/>
            <person name="Buhay C.J."/>
            <person name="Dinh H.H."/>
            <person name="Hawes A.C."/>
            <person name="Holder M."/>
            <person name="Kovar C.L."/>
            <person name="Lee S.L."/>
            <person name="Liu W."/>
            <person name="Nazareth L.V."/>
            <person name="Wang Q."/>
            <person name="Zhou J."/>
            <person name="Kaplan S.L."/>
            <person name="Weinstock G.M."/>
        </authorList>
    </citation>
    <scope>NUCLEOTIDE SEQUENCE [LARGE SCALE GENOMIC DNA]</scope>
    <source>
        <strain>USA300 / TCH1516</strain>
    </source>
</reference>
<name>GPDA_STAAT</name>
<accession>A8Z453</accession>
<dbReference type="EC" id="1.1.1.94" evidence="1"/>
<dbReference type="EMBL" id="CP000730">
    <property type="protein sequence ID" value="ABX29421.1"/>
    <property type="molecule type" value="Genomic_DNA"/>
</dbReference>
<dbReference type="RefSeq" id="WP_000161738.1">
    <property type="nucleotide sequence ID" value="NC_010079.1"/>
</dbReference>
<dbReference type="SMR" id="A8Z453"/>
<dbReference type="KEGG" id="sax:USA300HOU_1411"/>
<dbReference type="HOGENOM" id="CLU_033449_0_2_9"/>
<dbReference type="UniPathway" id="UPA00940"/>
<dbReference type="GO" id="GO:0005829">
    <property type="term" value="C:cytosol"/>
    <property type="evidence" value="ECO:0007669"/>
    <property type="project" value="TreeGrafter"/>
</dbReference>
<dbReference type="GO" id="GO:0047952">
    <property type="term" value="F:glycerol-3-phosphate dehydrogenase [NAD(P)+] activity"/>
    <property type="evidence" value="ECO:0007669"/>
    <property type="project" value="UniProtKB-UniRule"/>
</dbReference>
<dbReference type="GO" id="GO:0051287">
    <property type="term" value="F:NAD binding"/>
    <property type="evidence" value="ECO:0007669"/>
    <property type="project" value="InterPro"/>
</dbReference>
<dbReference type="GO" id="GO:0005975">
    <property type="term" value="P:carbohydrate metabolic process"/>
    <property type="evidence" value="ECO:0007669"/>
    <property type="project" value="InterPro"/>
</dbReference>
<dbReference type="GO" id="GO:0046167">
    <property type="term" value="P:glycerol-3-phosphate biosynthetic process"/>
    <property type="evidence" value="ECO:0007669"/>
    <property type="project" value="UniProtKB-UniRule"/>
</dbReference>
<dbReference type="GO" id="GO:0046168">
    <property type="term" value="P:glycerol-3-phosphate catabolic process"/>
    <property type="evidence" value="ECO:0007669"/>
    <property type="project" value="InterPro"/>
</dbReference>
<dbReference type="GO" id="GO:0006650">
    <property type="term" value="P:glycerophospholipid metabolic process"/>
    <property type="evidence" value="ECO:0007669"/>
    <property type="project" value="UniProtKB-UniRule"/>
</dbReference>
<dbReference type="GO" id="GO:0008654">
    <property type="term" value="P:phospholipid biosynthetic process"/>
    <property type="evidence" value="ECO:0007669"/>
    <property type="project" value="UniProtKB-KW"/>
</dbReference>
<dbReference type="FunFam" id="1.10.1040.10:FF:000001">
    <property type="entry name" value="Glycerol-3-phosphate dehydrogenase [NAD(P)+]"/>
    <property type="match status" value="1"/>
</dbReference>
<dbReference type="FunFam" id="3.40.50.720:FF:000019">
    <property type="entry name" value="Glycerol-3-phosphate dehydrogenase [NAD(P)+]"/>
    <property type="match status" value="1"/>
</dbReference>
<dbReference type="Gene3D" id="1.10.1040.10">
    <property type="entry name" value="N-(1-d-carboxylethyl)-l-norvaline Dehydrogenase, domain 2"/>
    <property type="match status" value="1"/>
</dbReference>
<dbReference type="Gene3D" id="3.40.50.720">
    <property type="entry name" value="NAD(P)-binding Rossmann-like Domain"/>
    <property type="match status" value="1"/>
</dbReference>
<dbReference type="HAMAP" id="MF_00394">
    <property type="entry name" value="NAD_Glyc3P_dehydrog"/>
    <property type="match status" value="1"/>
</dbReference>
<dbReference type="InterPro" id="IPR008927">
    <property type="entry name" value="6-PGluconate_DH-like_C_sf"/>
</dbReference>
<dbReference type="InterPro" id="IPR013328">
    <property type="entry name" value="6PGD_dom2"/>
</dbReference>
<dbReference type="InterPro" id="IPR006168">
    <property type="entry name" value="G3P_DH_NAD-dep"/>
</dbReference>
<dbReference type="InterPro" id="IPR006109">
    <property type="entry name" value="G3P_DH_NAD-dep_C"/>
</dbReference>
<dbReference type="InterPro" id="IPR011128">
    <property type="entry name" value="G3P_DH_NAD-dep_N"/>
</dbReference>
<dbReference type="InterPro" id="IPR036291">
    <property type="entry name" value="NAD(P)-bd_dom_sf"/>
</dbReference>
<dbReference type="NCBIfam" id="NF000940">
    <property type="entry name" value="PRK00094.1-2"/>
    <property type="match status" value="1"/>
</dbReference>
<dbReference type="NCBIfam" id="NF000941">
    <property type="entry name" value="PRK00094.1-3"/>
    <property type="match status" value="1"/>
</dbReference>
<dbReference type="NCBIfam" id="NF000942">
    <property type="entry name" value="PRK00094.1-4"/>
    <property type="match status" value="1"/>
</dbReference>
<dbReference type="PANTHER" id="PTHR11728">
    <property type="entry name" value="GLYCEROL-3-PHOSPHATE DEHYDROGENASE"/>
    <property type="match status" value="1"/>
</dbReference>
<dbReference type="PANTHER" id="PTHR11728:SF1">
    <property type="entry name" value="GLYCEROL-3-PHOSPHATE DEHYDROGENASE [NAD(+)] 2, CHLOROPLASTIC"/>
    <property type="match status" value="1"/>
</dbReference>
<dbReference type="Pfam" id="PF07479">
    <property type="entry name" value="NAD_Gly3P_dh_C"/>
    <property type="match status" value="1"/>
</dbReference>
<dbReference type="Pfam" id="PF01210">
    <property type="entry name" value="NAD_Gly3P_dh_N"/>
    <property type="match status" value="1"/>
</dbReference>
<dbReference type="PIRSF" id="PIRSF000114">
    <property type="entry name" value="Glycerol-3-P_dh"/>
    <property type="match status" value="1"/>
</dbReference>
<dbReference type="PRINTS" id="PR00077">
    <property type="entry name" value="GPDHDRGNASE"/>
</dbReference>
<dbReference type="SUPFAM" id="SSF48179">
    <property type="entry name" value="6-phosphogluconate dehydrogenase C-terminal domain-like"/>
    <property type="match status" value="1"/>
</dbReference>
<dbReference type="SUPFAM" id="SSF51735">
    <property type="entry name" value="NAD(P)-binding Rossmann-fold domains"/>
    <property type="match status" value="1"/>
</dbReference>
<dbReference type="PROSITE" id="PS00957">
    <property type="entry name" value="NAD_G3PDH"/>
    <property type="match status" value="1"/>
</dbReference>
<protein>
    <recommendedName>
        <fullName evidence="1">Glycerol-3-phosphate dehydrogenase [NAD(P)+]</fullName>
        <ecNumber evidence="1">1.1.1.94</ecNumber>
    </recommendedName>
    <alternativeName>
        <fullName evidence="1">NAD(P)(+)-dependent glycerol-3-phosphate dehydrogenase</fullName>
    </alternativeName>
    <alternativeName>
        <fullName evidence="1">NAD(P)H-dependent dihydroxyacetone-phosphate reductase</fullName>
    </alternativeName>
</protein>
<evidence type="ECO:0000255" key="1">
    <source>
        <dbReference type="HAMAP-Rule" id="MF_00394"/>
    </source>
</evidence>
<proteinExistence type="inferred from homology"/>
<feature type="chain" id="PRO_1000080322" description="Glycerol-3-phosphate dehydrogenase [NAD(P)+]">
    <location>
        <begin position="1"/>
        <end position="332"/>
    </location>
</feature>
<feature type="active site" description="Proton acceptor" evidence="1">
    <location>
        <position position="192"/>
    </location>
</feature>
<feature type="binding site" evidence="1">
    <location>
        <position position="11"/>
    </location>
    <ligand>
        <name>NADPH</name>
        <dbReference type="ChEBI" id="CHEBI:57783"/>
    </ligand>
</feature>
<feature type="binding site" evidence="1">
    <location>
        <position position="12"/>
    </location>
    <ligand>
        <name>NADPH</name>
        <dbReference type="ChEBI" id="CHEBI:57783"/>
    </ligand>
</feature>
<feature type="binding site" evidence="1">
    <location>
        <position position="32"/>
    </location>
    <ligand>
        <name>NADPH</name>
        <dbReference type="ChEBI" id="CHEBI:57783"/>
    </ligand>
</feature>
<feature type="binding site" evidence="1">
    <location>
        <position position="106"/>
    </location>
    <ligand>
        <name>NADPH</name>
        <dbReference type="ChEBI" id="CHEBI:57783"/>
    </ligand>
</feature>
<feature type="binding site" evidence="1">
    <location>
        <position position="106"/>
    </location>
    <ligand>
        <name>sn-glycerol 3-phosphate</name>
        <dbReference type="ChEBI" id="CHEBI:57597"/>
    </ligand>
</feature>
<feature type="binding site" evidence="1">
    <location>
        <position position="137"/>
    </location>
    <ligand>
        <name>sn-glycerol 3-phosphate</name>
        <dbReference type="ChEBI" id="CHEBI:57597"/>
    </ligand>
</feature>
<feature type="binding site" evidence="1">
    <location>
        <position position="139"/>
    </location>
    <ligand>
        <name>sn-glycerol 3-phosphate</name>
        <dbReference type="ChEBI" id="CHEBI:57597"/>
    </ligand>
</feature>
<feature type="binding site" evidence="1">
    <location>
        <position position="141"/>
    </location>
    <ligand>
        <name>NADPH</name>
        <dbReference type="ChEBI" id="CHEBI:57783"/>
    </ligand>
</feature>
<feature type="binding site" evidence="1">
    <location>
        <position position="192"/>
    </location>
    <ligand>
        <name>sn-glycerol 3-phosphate</name>
        <dbReference type="ChEBI" id="CHEBI:57597"/>
    </ligand>
</feature>
<feature type="binding site" evidence="1">
    <location>
        <position position="245"/>
    </location>
    <ligand>
        <name>sn-glycerol 3-phosphate</name>
        <dbReference type="ChEBI" id="CHEBI:57597"/>
    </ligand>
</feature>
<feature type="binding site" evidence="1">
    <location>
        <position position="255"/>
    </location>
    <ligand>
        <name>sn-glycerol 3-phosphate</name>
        <dbReference type="ChEBI" id="CHEBI:57597"/>
    </ligand>
</feature>
<feature type="binding site" evidence="1">
    <location>
        <position position="256"/>
    </location>
    <ligand>
        <name>NADPH</name>
        <dbReference type="ChEBI" id="CHEBI:57783"/>
    </ligand>
</feature>
<feature type="binding site" evidence="1">
    <location>
        <position position="256"/>
    </location>
    <ligand>
        <name>sn-glycerol 3-phosphate</name>
        <dbReference type="ChEBI" id="CHEBI:57597"/>
    </ligand>
</feature>
<feature type="binding site" evidence="1">
    <location>
        <position position="257"/>
    </location>
    <ligand>
        <name>sn-glycerol 3-phosphate</name>
        <dbReference type="ChEBI" id="CHEBI:57597"/>
    </ligand>
</feature>
<feature type="binding site" evidence="1">
    <location>
        <position position="280"/>
    </location>
    <ligand>
        <name>NADPH</name>
        <dbReference type="ChEBI" id="CHEBI:57783"/>
    </ligand>
</feature>
<feature type="binding site" evidence="1">
    <location>
        <position position="282"/>
    </location>
    <ligand>
        <name>NADPH</name>
        <dbReference type="ChEBI" id="CHEBI:57783"/>
    </ligand>
</feature>
<organism>
    <name type="scientific">Staphylococcus aureus (strain USA300 / TCH1516)</name>
    <dbReference type="NCBI Taxonomy" id="451516"/>
    <lineage>
        <taxon>Bacteria</taxon>
        <taxon>Bacillati</taxon>
        <taxon>Bacillota</taxon>
        <taxon>Bacilli</taxon>
        <taxon>Bacillales</taxon>
        <taxon>Staphylococcaceae</taxon>
        <taxon>Staphylococcus</taxon>
    </lineage>
</organism>
<gene>
    <name evidence="1" type="primary">gpsA</name>
    <name type="ordered locus">USA300HOU_1411</name>
</gene>
<keyword id="KW-0963">Cytoplasm</keyword>
<keyword id="KW-0444">Lipid biosynthesis</keyword>
<keyword id="KW-0443">Lipid metabolism</keyword>
<keyword id="KW-0520">NAD</keyword>
<keyword id="KW-0521">NADP</keyword>
<keyword id="KW-0547">Nucleotide-binding</keyword>
<keyword id="KW-0560">Oxidoreductase</keyword>
<keyword id="KW-0594">Phospholipid biosynthesis</keyword>
<keyword id="KW-1208">Phospholipid metabolism</keyword>